<feature type="chain" id="PRO_0000213943" description="26S proteasome non-ATPase regulatory subunit 7">
    <location>
        <begin position="1"/>
        <end position="324"/>
    </location>
</feature>
<feature type="domain" description="MPN" evidence="2">
    <location>
        <begin position="9"/>
        <end position="144"/>
    </location>
</feature>
<feature type="region of interest" description="Disordered" evidence="3">
    <location>
        <begin position="281"/>
        <end position="324"/>
    </location>
</feature>
<feature type="modified residue" description="N6-acetyllysine" evidence="9">
    <location>
        <position position="204"/>
    </location>
</feature>
<feature type="modified residue" description="N6-acetyllysine" evidence="9">
    <location>
        <position position="214"/>
    </location>
</feature>
<feature type="modified residue" description="N6-acetyllysine" evidence="1">
    <location>
        <position position="316"/>
    </location>
</feature>
<feature type="modified residue" description="N6-acetyllysine" evidence="1">
    <location>
        <position position="317"/>
    </location>
</feature>
<feature type="cross-link" description="Glycyl lysine isopeptide (Lys-Gly) (interchain with G-Cter in ubiquitin)">
    <location>
        <position position="180"/>
    </location>
</feature>
<feature type="sequence conflict" description="In Ref. 1; BAA08780." evidence="8" ref="1">
    <original>G</original>
    <variation>V</variation>
    <location>
        <position position="27"/>
    </location>
</feature>
<feature type="sequence conflict" description="In Ref. 1; BAA08780." evidence="8" ref="1">
    <original>VH</original>
    <variation>DQ</variation>
    <location>
        <begin position="144"/>
        <end position="145"/>
    </location>
</feature>
<feature type="sequence conflict" description="In Ref. 1; BAA08780." evidence="8" ref="1">
    <original>A</original>
    <variation>G</variation>
    <location>
        <position position="216"/>
    </location>
</feature>
<feature type="strand" evidence="10">
    <location>
        <begin position="7"/>
        <end position="11"/>
    </location>
</feature>
<feature type="helix" evidence="10">
    <location>
        <begin position="13"/>
        <end position="28"/>
    </location>
</feature>
<feature type="strand" evidence="10">
    <location>
        <begin position="36"/>
        <end position="56"/>
    </location>
</feature>
<feature type="strand" evidence="10">
    <location>
        <begin position="58"/>
        <end position="60"/>
    </location>
</feature>
<feature type="turn" evidence="11">
    <location>
        <begin position="64"/>
        <end position="66"/>
    </location>
</feature>
<feature type="strand" evidence="10">
    <location>
        <begin position="67"/>
        <end position="70"/>
    </location>
</feature>
<feature type="helix" evidence="10">
    <location>
        <begin position="72"/>
        <end position="83"/>
    </location>
</feature>
<feature type="strand" evidence="10">
    <location>
        <begin position="86"/>
        <end position="88"/>
    </location>
</feature>
<feature type="strand" evidence="10">
    <location>
        <begin position="90"/>
        <end position="96"/>
    </location>
</feature>
<feature type="helix" evidence="10">
    <location>
        <begin position="105"/>
        <end position="112"/>
    </location>
</feature>
<feature type="turn" evidence="10">
    <location>
        <begin position="113"/>
        <end position="115"/>
    </location>
</feature>
<feature type="strand" evidence="10">
    <location>
        <begin position="120"/>
        <end position="124"/>
    </location>
</feature>
<feature type="strand" evidence="11">
    <location>
        <begin position="130"/>
        <end position="132"/>
    </location>
</feature>
<feature type="strand" evidence="10">
    <location>
        <begin position="134"/>
        <end position="143"/>
    </location>
</feature>
<feature type="turn" evidence="11">
    <location>
        <begin position="145"/>
        <end position="148"/>
    </location>
</feature>
<feature type="strand" evidence="10">
    <location>
        <begin position="152"/>
        <end position="162"/>
    </location>
</feature>
<feature type="helix" evidence="10">
    <location>
        <begin position="166"/>
        <end position="178"/>
    </location>
</feature>
<feature type="helix" evidence="11">
    <location>
        <begin position="186"/>
        <end position="216"/>
    </location>
</feature>
<feature type="strand" evidence="11">
    <location>
        <begin position="218"/>
        <end position="220"/>
    </location>
</feature>
<feature type="strand" evidence="11">
    <location>
        <begin position="224"/>
        <end position="226"/>
    </location>
</feature>
<feature type="helix" evidence="11">
    <location>
        <begin position="229"/>
        <end position="235"/>
    </location>
</feature>
<feature type="helix" evidence="11">
    <location>
        <begin position="243"/>
        <end position="289"/>
    </location>
</feature>
<protein>
    <recommendedName>
        <fullName>26S proteasome non-ATPase regulatory subunit 7</fullName>
    </recommendedName>
    <alternativeName>
        <fullName>26S proteasome regulatory subunit RPN8</fullName>
    </alternativeName>
    <alternativeName>
        <fullName>26S proteasome regulatory subunit S12</fullName>
    </alternativeName>
    <alternativeName>
        <fullName>Mov34 protein homolog</fullName>
    </alternativeName>
    <alternativeName>
        <fullName>Proteasome subunit p40</fullName>
    </alternativeName>
</protein>
<sequence length="324" mass="37025">MPELAVQKVVVHPLVLLSVVDHFNRIGKVGNQKRVVGVLLGSWQKKVLDVSNSFAVPFDEDDKDDSVWFLDHDYLENMYGMFKKVNARERIVGWYHTGPKLHKNDIAINELMKRYCPNSVLVIIDVKPKDLGLPTEAYISVEEVHDDGTPTSKTFEHVTSEIGAEEAEEVGVEHLLRDIKDTTVGTLSQRITNQVHGLKGLNSKLLDIRSYLEKVATGKLPINHQIIYQLQDVFNLLPDVSLQEFVKAFYLKTNDQMVVVYLASLIRSVVALHNLINNKIANRDAEKKEGQEKEESKKDRKEDKEKDKDKEKSDVKKEEKKEKK</sequence>
<name>PSMD7_HUMAN</name>
<accession>P51665</accession>
<accession>D3DWS9</accession>
<accession>Q6PKI2</accession>
<accession>Q96E97</accession>
<reference key="1">
    <citation type="journal article" date="1995" name="Biochem. Biophys. Res. Commun.">
        <title>cDNA cloning of p40, a regulatory subunit of the human 26S proteasome, and a homolog of the Mov-34 gene product.</title>
        <authorList>
            <person name="Tsurumi C."/>
            <person name="DeMartino G.N."/>
            <person name="Slaughter C."/>
            <person name="Shimbara N."/>
            <person name="Tanaka K."/>
        </authorList>
    </citation>
    <scope>NUCLEOTIDE SEQUENCE [MRNA]</scope>
</reference>
<reference key="2">
    <citation type="submission" date="2005-09" db="EMBL/GenBank/DDBJ databases">
        <authorList>
            <person name="Mural R.J."/>
            <person name="Istrail S."/>
            <person name="Sutton G.G."/>
            <person name="Florea L."/>
            <person name="Halpern A.L."/>
            <person name="Mobarry C.M."/>
            <person name="Lippert R."/>
            <person name="Walenz B."/>
            <person name="Shatkay H."/>
            <person name="Dew I."/>
            <person name="Miller J.R."/>
            <person name="Flanigan M.J."/>
            <person name="Edwards N.J."/>
            <person name="Bolanos R."/>
            <person name="Fasulo D."/>
            <person name="Halldorsson B.V."/>
            <person name="Hannenhalli S."/>
            <person name="Turner R."/>
            <person name="Yooseph S."/>
            <person name="Lu F."/>
            <person name="Nusskern D.R."/>
            <person name="Shue B.C."/>
            <person name="Zheng X.H."/>
            <person name="Zhong F."/>
            <person name="Delcher A.L."/>
            <person name="Huson D.H."/>
            <person name="Kravitz S.A."/>
            <person name="Mouchard L."/>
            <person name="Reinert K."/>
            <person name="Remington K.A."/>
            <person name="Clark A.G."/>
            <person name="Waterman M.S."/>
            <person name="Eichler E.E."/>
            <person name="Adams M.D."/>
            <person name="Hunkapiller M.W."/>
            <person name="Myers E.W."/>
            <person name="Venter J.C."/>
        </authorList>
    </citation>
    <scope>NUCLEOTIDE SEQUENCE [LARGE SCALE GENOMIC DNA]</scope>
</reference>
<reference key="3">
    <citation type="journal article" date="2004" name="Genome Res.">
        <title>The status, quality, and expansion of the NIH full-length cDNA project: the Mammalian Gene Collection (MGC).</title>
        <authorList>
            <consortium name="The MGC Project Team"/>
        </authorList>
    </citation>
    <scope>NUCLEOTIDE SEQUENCE [LARGE SCALE MRNA]</scope>
    <source>
        <tissue>Lung</tissue>
        <tissue>Skin</tissue>
    </source>
</reference>
<reference key="4">
    <citation type="journal article" date="1992" name="Eur. J. Biochem.">
        <title>Demonstration that a human 26S proteolytic complex consists of a proteasome and multiple associated protein components and hydrolyzes ATP and ubiquitin-ligated proteins by closely linked mechanisms.</title>
        <authorList>
            <person name="Kanayama H.O."/>
            <person name="Tamura T."/>
            <person name="Ugai S."/>
            <person name="Kagawa S."/>
            <person name="Tanahashi N."/>
            <person name="Yoshimura T."/>
            <person name="Tanaka K."/>
            <person name="Ichihara A."/>
        </authorList>
    </citation>
    <scope>FUNCTION</scope>
</reference>
<reference key="5">
    <citation type="journal article" date="2007" name="Biochemistry">
        <title>Mass spectrometric characterization of the affinity-purified human 26S proteasome complex.</title>
        <authorList>
            <person name="Wang X."/>
            <person name="Chen C.-F."/>
            <person name="Baker P.R."/>
            <person name="Chen P.-L."/>
            <person name="Kaiser P."/>
            <person name="Huang L."/>
        </authorList>
    </citation>
    <scope>IDENTIFICATION BY MASS SPECTROMETRY [LARGE SCALE ANALYSIS]</scope>
    <source>
        <tissue>Embryonic kidney</tissue>
    </source>
</reference>
<reference key="6">
    <citation type="journal article" date="2009" name="Science">
        <title>Lysine acetylation targets protein complexes and co-regulates major cellular functions.</title>
        <authorList>
            <person name="Choudhary C."/>
            <person name="Kumar C."/>
            <person name="Gnad F."/>
            <person name="Nielsen M.L."/>
            <person name="Rehman M."/>
            <person name="Walther T.C."/>
            <person name="Olsen J.V."/>
            <person name="Mann M."/>
        </authorList>
    </citation>
    <scope>ACETYLATION [LARGE SCALE ANALYSIS] AT LYS-204 AND LYS-214</scope>
    <scope>IDENTIFICATION BY MASS SPECTROMETRY [LARGE SCALE ANALYSIS]</scope>
</reference>
<reference key="7">
    <citation type="journal article" date="2011" name="BMC Syst. Biol.">
        <title>Initial characterization of the human central proteome.</title>
        <authorList>
            <person name="Burkard T.R."/>
            <person name="Planyavsky M."/>
            <person name="Kaupe I."/>
            <person name="Breitwieser F.P."/>
            <person name="Buerckstuemmer T."/>
            <person name="Bennett K.L."/>
            <person name="Superti-Furga G."/>
            <person name="Colinge J."/>
        </authorList>
    </citation>
    <scope>IDENTIFICATION BY MASS SPECTROMETRY [LARGE SCALE ANALYSIS]</scope>
</reference>
<reference key="8">
    <citation type="journal article" date="2011" name="Retrovirology">
        <title>TRIM5alpha associates with proteasomal subunits in cells while in complex with HIV-1 virions.</title>
        <authorList>
            <person name="Lukic Z."/>
            <person name="Hausmann S."/>
            <person name="Sebastian S."/>
            <person name="Rucci J."/>
            <person name="Sastri J."/>
            <person name="Robia S.L."/>
            <person name="Luban J."/>
            <person name="Campbell E.M."/>
        </authorList>
    </citation>
    <scope>INTERACTION WITH TRIM5</scope>
</reference>
<reference key="9">
    <citation type="journal article" date="2014" name="J. Proteomics">
        <title>An enzyme assisted RP-RPLC approach for in-depth analysis of human liver phosphoproteome.</title>
        <authorList>
            <person name="Bian Y."/>
            <person name="Song C."/>
            <person name="Cheng K."/>
            <person name="Dong M."/>
            <person name="Wang F."/>
            <person name="Huang J."/>
            <person name="Sun D."/>
            <person name="Wang L."/>
            <person name="Ye M."/>
            <person name="Zou H."/>
        </authorList>
    </citation>
    <scope>IDENTIFICATION BY MASS SPECTROMETRY [LARGE SCALE ANALYSIS]</scope>
    <source>
        <tissue>Liver</tissue>
    </source>
</reference>
<reference key="10">
    <citation type="journal article" date="2015" name="Proteomics">
        <title>N-terminome analysis of the human mitochondrial proteome.</title>
        <authorList>
            <person name="Vaca Jacome A.S."/>
            <person name="Rabilloud T."/>
            <person name="Schaeffer-Reiss C."/>
            <person name="Rompais M."/>
            <person name="Ayoub D."/>
            <person name="Lane L."/>
            <person name="Bairoch A."/>
            <person name="Van Dorsselaer A."/>
            <person name="Carapito C."/>
        </authorList>
    </citation>
    <scope>IDENTIFICATION BY MASS SPECTROMETRY [LARGE SCALE ANALYSIS]</scope>
</reference>
<reference key="11">
    <citation type="journal article" date="2007" name="J. Mol. Biol.">
        <title>The crystal structure of the human Mov34 MPN domain reveals a metal-free dimer.</title>
        <authorList>
            <person name="Sanches M."/>
            <person name="Alves B.S.C."/>
            <person name="Zanchin N.I.T."/>
            <person name="Guimaraes B.G."/>
        </authorList>
    </citation>
    <scope>X-RAY CRYSTALLOGRAPHY (1.95 ANGSTROMS) OF 1-186</scope>
    <scope>LACK OF METAL-BINDING</scope>
</reference>
<reference key="12">
    <citation type="journal article" date="2016" name="Nat. Struct. Mol. Biol.">
        <title>An atomic structure of the human 26S proteasome.</title>
        <authorList>
            <person name="Huang X."/>
            <person name="Luan B."/>
            <person name="Wu J."/>
            <person name="Shi Y."/>
        </authorList>
    </citation>
    <scope>STRUCTURE BY ELECTRON MICROSCOPY (3.50 ANGSTROMS) OF 1-389</scope>
    <scope>SUBUNIT</scope>
</reference>
<reference key="13">
    <citation type="journal article" date="2016" name="Proc. Natl. Acad. Sci. U.S.A.">
        <title>Structure of the human 26S proteasome at a resolution of 3.9 Aa.</title>
        <authorList>
            <person name="Schweitzer A."/>
            <person name="Aufderheide A."/>
            <person name="Rudack T."/>
            <person name="Beck F."/>
            <person name="Pfeifer G."/>
            <person name="Plitzko J.M."/>
            <person name="Sakata E."/>
            <person name="Schulten K."/>
            <person name="Foerster F."/>
            <person name="Baumeister W."/>
        </authorList>
    </citation>
    <scope>STRUCTURE BY ELECTRON MICROSCOPY (4.50 ANGSTROMS) OF 1-389</scope>
    <scope>SUBUNIT</scope>
</reference>
<comment type="function">
    <text evidence="4">Component of the 26S proteasome, a multiprotein complex involved in the ATP-dependent degradation of ubiquitinated proteins. This complex plays a key role in the maintenance of protein homeostasis by removing misfolded or damaged proteins, which could impair cellular functions, and by removing proteins whose functions are no longer required. Therefore, the proteasome participates in numerous cellular processes, including cell cycle progression, apoptosis, or DNA damage repair.</text>
</comment>
<comment type="subunit">
    <text evidence="5 6 7">Component of the 19S proteasome regulatory particle complex. The 26S proteasome consists of a 20S core particle (CP) and two 19S regulatory subunits (RP). The regulatory particle is made of a lid composed of 9 subunits including PSMD7, a base containing 6 ATPases and few additional components (PubMed:27342858, PubMed:27428775). Within the complex, PSMD7 interacts with subunit PSMD4 through their respective MPN domain. Interacts with TRIM5 (PubMed:22078707).</text>
</comment>
<comment type="interaction">
    <interactant intactId="EBI-357659">
        <id>P51665</id>
    </interactant>
    <interactant intactId="EBI-946046">
        <id>P54252</id>
        <label>ATXN3</label>
    </interactant>
    <organismsDiffer>false</organismsDiffer>
    <experiments>9</experiments>
</comment>
<comment type="interaction">
    <interactant intactId="EBI-357659">
        <id>P51665</id>
    </interactant>
    <interactant intactId="EBI-466029">
        <id>P42858</id>
        <label>HTT</label>
    </interactant>
    <organismsDiffer>false</organismsDiffer>
    <experiments>10</experiments>
</comment>
<comment type="interaction">
    <interactant intactId="EBI-357659">
        <id>P51665</id>
    </interactant>
    <interactant intactId="EBI-722193">
        <id>O00487</id>
        <label>PSMD14</label>
    </interactant>
    <organismsDiffer>false</organismsDiffer>
    <experiments>16</experiments>
</comment>
<comment type="miscellaneous">
    <text>Does not bind a metal ion.</text>
</comment>
<comment type="similarity">
    <text evidence="8">Belongs to the peptidase M67A family.</text>
</comment>
<comment type="sequence caution" evidence="8">
    <conflict type="miscellaneous discrepancy">
        <sequence resource="EMBL-CDS" id="AAH00338"/>
    </conflict>
    <text>Contaminating sequence. Potential poly-A sequence.</text>
</comment>
<organism>
    <name type="scientific">Homo sapiens</name>
    <name type="common">Human</name>
    <dbReference type="NCBI Taxonomy" id="9606"/>
    <lineage>
        <taxon>Eukaryota</taxon>
        <taxon>Metazoa</taxon>
        <taxon>Chordata</taxon>
        <taxon>Craniata</taxon>
        <taxon>Vertebrata</taxon>
        <taxon>Euteleostomi</taxon>
        <taxon>Mammalia</taxon>
        <taxon>Eutheria</taxon>
        <taxon>Euarchontoglires</taxon>
        <taxon>Primates</taxon>
        <taxon>Haplorrhini</taxon>
        <taxon>Catarrhini</taxon>
        <taxon>Hominidae</taxon>
        <taxon>Homo</taxon>
    </lineage>
</organism>
<keyword id="KW-0002">3D-structure</keyword>
<keyword id="KW-0007">Acetylation</keyword>
<keyword id="KW-1017">Isopeptide bond</keyword>
<keyword id="KW-0647">Proteasome</keyword>
<keyword id="KW-1267">Proteomics identification</keyword>
<keyword id="KW-1185">Reference proteome</keyword>
<keyword id="KW-0832">Ubl conjugation</keyword>
<gene>
    <name type="primary">PSMD7</name>
    <name type="synonym">MOV34L</name>
</gene>
<evidence type="ECO:0000250" key="1">
    <source>
        <dbReference type="UniProtKB" id="P26516"/>
    </source>
</evidence>
<evidence type="ECO:0000255" key="2">
    <source>
        <dbReference type="PROSITE-ProRule" id="PRU01182"/>
    </source>
</evidence>
<evidence type="ECO:0000256" key="3">
    <source>
        <dbReference type="SAM" id="MobiDB-lite"/>
    </source>
</evidence>
<evidence type="ECO:0000269" key="4">
    <source>
    </source>
</evidence>
<evidence type="ECO:0000269" key="5">
    <source>
    </source>
</evidence>
<evidence type="ECO:0000269" key="6">
    <source>
    </source>
</evidence>
<evidence type="ECO:0000269" key="7">
    <source>
    </source>
</evidence>
<evidence type="ECO:0000305" key="8"/>
<evidence type="ECO:0007744" key="9">
    <source>
    </source>
</evidence>
<evidence type="ECO:0007829" key="10">
    <source>
        <dbReference type="PDB" id="2O95"/>
    </source>
</evidence>
<evidence type="ECO:0007829" key="11">
    <source>
        <dbReference type="PDB" id="9E8J"/>
    </source>
</evidence>
<proteinExistence type="evidence at protein level"/>
<dbReference type="EMBL" id="D50063">
    <property type="protein sequence ID" value="BAA08780.1"/>
    <property type="molecule type" value="mRNA"/>
</dbReference>
<dbReference type="EMBL" id="CH471166">
    <property type="protein sequence ID" value="EAW59162.1"/>
    <property type="molecule type" value="Genomic_DNA"/>
</dbReference>
<dbReference type="EMBL" id="CH471166">
    <property type="protein sequence ID" value="EAW59163.1"/>
    <property type="molecule type" value="Genomic_DNA"/>
</dbReference>
<dbReference type="EMBL" id="BC000338">
    <property type="protein sequence ID" value="AAH00338.1"/>
    <property type="status" value="ALT_SEQ"/>
    <property type="molecule type" value="mRNA"/>
</dbReference>
<dbReference type="EMBL" id="BC012606">
    <property type="protein sequence ID" value="AAH12606.1"/>
    <property type="molecule type" value="mRNA"/>
</dbReference>
<dbReference type="CCDS" id="CCDS10910.1"/>
<dbReference type="PIR" id="JC4154">
    <property type="entry name" value="JC4154"/>
</dbReference>
<dbReference type="PIR" id="S65491">
    <property type="entry name" value="S65491"/>
</dbReference>
<dbReference type="RefSeq" id="NP_002802.2">
    <property type="nucleotide sequence ID" value="NM_002811.4"/>
</dbReference>
<dbReference type="PDB" id="2O95">
    <property type="method" value="X-ray"/>
    <property type="resolution" value="1.95 A"/>
    <property type="chains" value="A/B=1-186"/>
</dbReference>
<dbReference type="PDB" id="2O96">
    <property type="method" value="X-ray"/>
    <property type="resolution" value="3.00 A"/>
    <property type="chains" value="A/B=1-177"/>
</dbReference>
<dbReference type="PDB" id="5GJQ">
    <property type="method" value="EM"/>
    <property type="resolution" value="4.50 A"/>
    <property type="chains" value="U=1-324"/>
</dbReference>
<dbReference type="PDB" id="5GJR">
    <property type="method" value="EM"/>
    <property type="resolution" value="3.50 A"/>
    <property type="chains" value="8/U=1-324"/>
</dbReference>
<dbReference type="PDB" id="5L4K">
    <property type="method" value="EM"/>
    <property type="resolution" value="4.50 A"/>
    <property type="chains" value="U=1-324"/>
</dbReference>
<dbReference type="PDB" id="5LN3">
    <property type="method" value="EM"/>
    <property type="resolution" value="6.80 A"/>
    <property type="chains" value="U=1-324"/>
</dbReference>
<dbReference type="PDB" id="5M32">
    <property type="method" value="EM"/>
    <property type="resolution" value="3.80 A"/>
    <property type="chains" value="n=1-324"/>
</dbReference>
<dbReference type="PDB" id="5T0C">
    <property type="method" value="EM"/>
    <property type="resolution" value="3.80 A"/>
    <property type="chains" value="AZ/BZ=1-324"/>
</dbReference>
<dbReference type="PDB" id="5T0G">
    <property type="method" value="EM"/>
    <property type="resolution" value="4.40 A"/>
    <property type="chains" value="Z=1-324"/>
</dbReference>
<dbReference type="PDB" id="5T0H">
    <property type="method" value="EM"/>
    <property type="resolution" value="6.80 A"/>
    <property type="chains" value="Z=1-324"/>
</dbReference>
<dbReference type="PDB" id="5T0I">
    <property type="method" value="EM"/>
    <property type="resolution" value="8.00 A"/>
    <property type="chains" value="Z=1-324"/>
</dbReference>
<dbReference type="PDB" id="5T0J">
    <property type="method" value="EM"/>
    <property type="resolution" value="8.00 A"/>
    <property type="chains" value="Z=1-324"/>
</dbReference>
<dbReference type="PDB" id="5VFP">
    <property type="method" value="EM"/>
    <property type="resolution" value="4.20 A"/>
    <property type="chains" value="Z=5-290"/>
</dbReference>
<dbReference type="PDB" id="5VFQ">
    <property type="method" value="EM"/>
    <property type="resolution" value="4.20 A"/>
    <property type="chains" value="Z=5-290"/>
</dbReference>
<dbReference type="PDB" id="5VFR">
    <property type="method" value="EM"/>
    <property type="resolution" value="4.90 A"/>
    <property type="chains" value="Z=5-290"/>
</dbReference>
<dbReference type="PDB" id="5VFS">
    <property type="method" value="EM"/>
    <property type="resolution" value="3.60 A"/>
    <property type="chains" value="Z=5-290"/>
</dbReference>
<dbReference type="PDB" id="5VFT">
    <property type="method" value="EM"/>
    <property type="resolution" value="7.00 A"/>
    <property type="chains" value="Z=5-290"/>
</dbReference>
<dbReference type="PDB" id="5VFU">
    <property type="method" value="EM"/>
    <property type="resolution" value="5.80 A"/>
    <property type="chains" value="Z=5-290"/>
</dbReference>
<dbReference type="PDB" id="5VGZ">
    <property type="method" value="EM"/>
    <property type="resolution" value="3.70 A"/>
    <property type="chains" value="Z=5-290"/>
</dbReference>
<dbReference type="PDB" id="5VHF">
    <property type="method" value="EM"/>
    <property type="resolution" value="5.70 A"/>
    <property type="chains" value="Z=5-290"/>
</dbReference>
<dbReference type="PDB" id="5VHH">
    <property type="method" value="EM"/>
    <property type="resolution" value="6.10 A"/>
    <property type="chains" value="Z=5-290"/>
</dbReference>
<dbReference type="PDB" id="5VHI">
    <property type="method" value="EM"/>
    <property type="resolution" value="6.80 A"/>
    <property type="chains" value="Z=5-290"/>
</dbReference>
<dbReference type="PDB" id="5VHS">
    <property type="method" value="EM"/>
    <property type="resolution" value="8.80 A"/>
    <property type="chains" value="Z=5-290"/>
</dbReference>
<dbReference type="PDB" id="6MSB">
    <property type="method" value="EM"/>
    <property type="resolution" value="3.00 A"/>
    <property type="chains" value="Z=1-324"/>
</dbReference>
<dbReference type="PDB" id="6MSD">
    <property type="method" value="EM"/>
    <property type="resolution" value="3.20 A"/>
    <property type="chains" value="Z=1-324"/>
</dbReference>
<dbReference type="PDB" id="6MSG">
    <property type="method" value="EM"/>
    <property type="resolution" value="3.50 A"/>
    <property type="chains" value="Z=1-324"/>
</dbReference>
<dbReference type="PDB" id="6MSH">
    <property type="method" value="EM"/>
    <property type="resolution" value="3.60 A"/>
    <property type="chains" value="Z=1-324"/>
</dbReference>
<dbReference type="PDB" id="6MSJ">
    <property type="method" value="EM"/>
    <property type="resolution" value="3.30 A"/>
    <property type="chains" value="Z=1-324"/>
</dbReference>
<dbReference type="PDB" id="6MSK">
    <property type="method" value="EM"/>
    <property type="resolution" value="3.20 A"/>
    <property type="chains" value="Z=1-324"/>
</dbReference>
<dbReference type="PDB" id="6WJD">
    <property type="method" value="EM"/>
    <property type="resolution" value="4.80 A"/>
    <property type="chains" value="Z=1-324"/>
</dbReference>
<dbReference type="PDB" id="6WJN">
    <property type="method" value="EM"/>
    <property type="resolution" value="5.70 A"/>
    <property type="chains" value="Z=5-290"/>
</dbReference>
<dbReference type="PDB" id="7QXN">
    <property type="method" value="EM"/>
    <property type="resolution" value="3.70 A"/>
    <property type="chains" value="Z=1-324"/>
</dbReference>
<dbReference type="PDB" id="7QXP">
    <property type="method" value="EM"/>
    <property type="resolution" value="3.60 A"/>
    <property type="chains" value="Z=1-324"/>
</dbReference>
<dbReference type="PDB" id="7QXU">
    <property type="method" value="EM"/>
    <property type="resolution" value="4.30 A"/>
    <property type="chains" value="Z=1-324"/>
</dbReference>
<dbReference type="PDB" id="7QXW">
    <property type="method" value="EM"/>
    <property type="resolution" value="4.10 A"/>
    <property type="chains" value="Z=1-324"/>
</dbReference>
<dbReference type="PDB" id="7QXX">
    <property type="method" value="EM"/>
    <property type="resolution" value="4.40 A"/>
    <property type="chains" value="Z=1-324"/>
</dbReference>
<dbReference type="PDB" id="7QY7">
    <property type="method" value="EM"/>
    <property type="resolution" value="4.70 A"/>
    <property type="chains" value="Z=1-324"/>
</dbReference>
<dbReference type="PDB" id="7QYA">
    <property type="method" value="EM"/>
    <property type="resolution" value="4.80 A"/>
    <property type="chains" value="Z=1-324"/>
</dbReference>
<dbReference type="PDB" id="7QYB">
    <property type="method" value="EM"/>
    <property type="resolution" value="4.10 A"/>
    <property type="chains" value="Z=1-324"/>
</dbReference>
<dbReference type="PDB" id="7W37">
    <property type="method" value="EM"/>
    <property type="resolution" value="3.00 A"/>
    <property type="chains" value="Z=1-324"/>
</dbReference>
<dbReference type="PDB" id="7W38">
    <property type="method" value="EM"/>
    <property type="resolution" value="3.10 A"/>
    <property type="chains" value="Z=1-324"/>
</dbReference>
<dbReference type="PDB" id="7W39">
    <property type="method" value="EM"/>
    <property type="resolution" value="3.20 A"/>
    <property type="chains" value="Z=1-324"/>
</dbReference>
<dbReference type="PDB" id="7W3A">
    <property type="method" value="EM"/>
    <property type="resolution" value="3.50 A"/>
    <property type="chains" value="Z=1-324"/>
</dbReference>
<dbReference type="PDB" id="7W3B">
    <property type="method" value="EM"/>
    <property type="resolution" value="3.60 A"/>
    <property type="chains" value="Z=1-324"/>
</dbReference>
<dbReference type="PDB" id="7W3C">
    <property type="method" value="EM"/>
    <property type="resolution" value="3.40 A"/>
    <property type="chains" value="Z=1-324"/>
</dbReference>
<dbReference type="PDB" id="7W3F">
    <property type="method" value="EM"/>
    <property type="resolution" value="3.30 A"/>
    <property type="chains" value="Z=1-324"/>
</dbReference>
<dbReference type="PDB" id="7W3G">
    <property type="method" value="EM"/>
    <property type="resolution" value="3.20 A"/>
    <property type="chains" value="Z=1-324"/>
</dbReference>
<dbReference type="PDB" id="7W3H">
    <property type="method" value="EM"/>
    <property type="resolution" value="3.20 A"/>
    <property type="chains" value="Z=1-324"/>
</dbReference>
<dbReference type="PDB" id="7W3I">
    <property type="method" value="EM"/>
    <property type="resolution" value="3.50 A"/>
    <property type="chains" value="Z=1-324"/>
</dbReference>
<dbReference type="PDB" id="7W3J">
    <property type="method" value="EM"/>
    <property type="resolution" value="3.50 A"/>
    <property type="chains" value="Z=1-324"/>
</dbReference>
<dbReference type="PDB" id="7W3K">
    <property type="method" value="EM"/>
    <property type="resolution" value="3.60 A"/>
    <property type="chains" value="Z=1-324"/>
</dbReference>
<dbReference type="PDB" id="7W3M">
    <property type="method" value="EM"/>
    <property type="resolution" value="3.50 A"/>
    <property type="chains" value="Z=1-324"/>
</dbReference>
<dbReference type="PDB" id="8CVT">
    <property type="method" value="EM"/>
    <property type="resolution" value="3.00 A"/>
    <property type="chains" value="Z=1-324"/>
</dbReference>
<dbReference type="PDB" id="8JRI">
    <property type="method" value="EM"/>
    <property type="resolution" value="3.40 A"/>
    <property type="chains" value="Z=1-324"/>
</dbReference>
<dbReference type="PDB" id="8JRT">
    <property type="method" value="EM"/>
    <property type="resolution" value="3.60 A"/>
    <property type="chains" value="Z=1-324"/>
</dbReference>
<dbReference type="PDB" id="8JTI">
    <property type="method" value="EM"/>
    <property type="resolution" value="3.80 A"/>
    <property type="chains" value="Z=1-324"/>
</dbReference>
<dbReference type="PDB" id="8K0G">
    <property type="method" value="EM"/>
    <property type="resolution" value="3.80 A"/>
    <property type="chains" value="Z=1-324"/>
</dbReference>
<dbReference type="PDB" id="8USB">
    <property type="method" value="EM"/>
    <property type="resolution" value="2.73 A"/>
    <property type="chains" value="Z=1-324"/>
</dbReference>
<dbReference type="PDB" id="8USC">
    <property type="method" value="EM"/>
    <property type="resolution" value="3.10 A"/>
    <property type="chains" value="Z=1-324"/>
</dbReference>
<dbReference type="PDB" id="9E8G">
    <property type="method" value="EM"/>
    <property type="resolution" value="3.01 A"/>
    <property type="chains" value="Z=1-324"/>
</dbReference>
<dbReference type="PDB" id="9E8H">
    <property type="method" value="EM"/>
    <property type="resolution" value="2.90 A"/>
    <property type="chains" value="Z=1-324"/>
</dbReference>
<dbReference type="PDB" id="9E8I">
    <property type="method" value="EM"/>
    <property type="resolution" value="2.87 A"/>
    <property type="chains" value="Z=1-324"/>
</dbReference>
<dbReference type="PDB" id="9E8J">
    <property type="method" value="EM"/>
    <property type="resolution" value="3.47 A"/>
    <property type="chains" value="Z=1-324"/>
</dbReference>
<dbReference type="PDB" id="9E8K">
    <property type="method" value="EM"/>
    <property type="resolution" value="4.08 A"/>
    <property type="chains" value="Z=1-324"/>
</dbReference>
<dbReference type="PDB" id="9E8L">
    <property type="method" value="EM"/>
    <property type="resolution" value="3.59 A"/>
    <property type="chains" value="Z=1-324"/>
</dbReference>
<dbReference type="PDB" id="9E8N">
    <property type="method" value="EM"/>
    <property type="resolution" value="3.62 A"/>
    <property type="chains" value="Z=1-324"/>
</dbReference>
<dbReference type="PDB" id="9E8O">
    <property type="method" value="EM"/>
    <property type="resolution" value="3.10 A"/>
    <property type="chains" value="Z=1-324"/>
</dbReference>
<dbReference type="PDB" id="9E8Q">
    <property type="method" value="EM"/>
    <property type="resolution" value="3.16 A"/>
    <property type="chains" value="Z=1-324"/>
</dbReference>
<dbReference type="PDBsum" id="2O95"/>
<dbReference type="PDBsum" id="2O96"/>
<dbReference type="PDBsum" id="5GJQ"/>
<dbReference type="PDBsum" id="5GJR"/>
<dbReference type="PDBsum" id="5L4K"/>
<dbReference type="PDBsum" id="5LN3"/>
<dbReference type="PDBsum" id="5M32"/>
<dbReference type="PDBsum" id="5T0C"/>
<dbReference type="PDBsum" id="5T0G"/>
<dbReference type="PDBsum" id="5T0H"/>
<dbReference type="PDBsum" id="5T0I"/>
<dbReference type="PDBsum" id="5T0J"/>
<dbReference type="PDBsum" id="5VFP"/>
<dbReference type="PDBsum" id="5VFQ"/>
<dbReference type="PDBsum" id="5VFR"/>
<dbReference type="PDBsum" id="5VFS"/>
<dbReference type="PDBsum" id="5VFT"/>
<dbReference type="PDBsum" id="5VFU"/>
<dbReference type="PDBsum" id="5VGZ"/>
<dbReference type="PDBsum" id="5VHF"/>
<dbReference type="PDBsum" id="5VHH"/>
<dbReference type="PDBsum" id="5VHI"/>
<dbReference type="PDBsum" id="5VHS"/>
<dbReference type="PDBsum" id="6MSB"/>
<dbReference type="PDBsum" id="6MSD"/>
<dbReference type="PDBsum" id="6MSG"/>
<dbReference type="PDBsum" id="6MSH"/>
<dbReference type="PDBsum" id="6MSJ"/>
<dbReference type="PDBsum" id="6MSK"/>
<dbReference type="PDBsum" id="6WJD"/>
<dbReference type="PDBsum" id="6WJN"/>
<dbReference type="PDBsum" id="7QXN"/>
<dbReference type="PDBsum" id="7QXP"/>
<dbReference type="PDBsum" id="7QXU"/>
<dbReference type="PDBsum" id="7QXW"/>
<dbReference type="PDBsum" id="7QXX"/>
<dbReference type="PDBsum" id="7QY7"/>
<dbReference type="PDBsum" id="7QYA"/>
<dbReference type="PDBsum" id="7QYB"/>
<dbReference type="PDBsum" id="7W37"/>
<dbReference type="PDBsum" id="7W38"/>
<dbReference type="PDBsum" id="7W39"/>
<dbReference type="PDBsum" id="7W3A"/>
<dbReference type="PDBsum" id="7W3B"/>
<dbReference type="PDBsum" id="7W3C"/>
<dbReference type="PDBsum" id="7W3F"/>
<dbReference type="PDBsum" id="7W3G"/>
<dbReference type="PDBsum" id="7W3H"/>
<dbReference type="PDBsum" id="7W3I"/>
<dbReference type="PDBsum" id="7W3J"/>
<dbReference type="PDBsum" id="7W3K"/>
<dbReference type="PDBsum" id="7W3M"/>
<dbReference type="PDBsum" id="8CVT"/>
<dbReference type="PDBsum" id="8JRI"/>
<dbReference type="PDBsum" id="8JRT"/>
<dbReference type="PDBsum" id="8JTI"/>
<dbReference type="PDBsum" id="8K0G"/>
<dbReference type="PDBsum" id="8USB"/>
<dbReference type="PDBsum" id="8USC"/>
<dbReference type="PDBsum" id="9E8G"/>
<dbReference type="PDBsum" id="9E8H"/>
<dbReference type="PDBsum" id="9E8I"/>
<dbReference type="PDBsum" id="9E8J"/>
<dbReference type="PDBsum" id="9E8K"/>
<dbReference type="PDBsum" id="9E8L"/>
<dbReference type="PDBsum" id="9E8N"/>
<dbReference type="PDBsum" id="9E8O"/>
<dbReference type="PDBsum" id="9E8Q"/>
<dbReference type="EMDB" id="EMD-14201"/>
<dbReference type="EMDB" id="EMD-14202"/>
<dbReference type="EMDB" id="EMD-14203"/>
<dbReference type="EMDB" id="EMD-14204"/>
<dbReference type="EMDB" id="EMD-14205"/>
<dbReference type="EMDB" id="EMD-14209"/>
<dbReference type="EMDB" id="EMD-14210"/>
<dbReference type="EMDB" id="EMD-14211"/>
<dbReference type="EMDB" id="EMD-21691"/>
<dbReference type="EMDB" id="EMD-21696"/>
<dbReference type="EMDB" id="EMD-27018"/>
<dbReference type="EMDB" id="EMD-32272"/>
<dbReference type="EMDB" id="EMD-32273"/>
<dbReference type="EMDB" id="EMD-32274"/>
<dbReference type="EMDB" id="EMD-32275"/>
<dbReference type="EMDB" id="EMD-32276"/>
<dbReference type="EMDB" id="EMD-32277"/>
<dbReference type="EMDB" id="EMD-32278"/>
<dbReference type="EMDB" id="EMD-32279"/>
<dbReference type="EMDB" id="EMD-32280"/>
<dbReference type="EMDB" id="EMD-32281"/>
<dbReference type="EMDB" id="EMD-32282"/>
<dbReference type="EMDB" id="EMD-32283"/>
<dbReference type="EMDB" id="EMD-32284"/>
<dbReference type="EMDB" id="EMD-36598"/>
<dbReference type="EMDB" id="EMD-36605"/>
<dbReference type="EMDB" id="EMD-36645"/>
<dbReference type="EMDB" id="EMD-36764"/>
<dbReference type="EMDB" id="EMD-4089"/>
<dbReference type="EMDB" id="EMD-4146"/>
<dbReference type="EMDB" id="EMD-42506"/>
<dbReference type="EMDB" id="EMD-42507"/>
<dbReference type="EMDB" id="EMD-47719"/>
<dbReference type="EMDB" id="EMD-47720"/>
<dbReference type="EMDB" id="EMD-47721"/>
<dbReference type="EMDB" id="EMD-47722"/>
<dbReference type="EMDB" id="EMD-47723"/>
<dbReference type="EMDB" id="EMD-47724"/>
<dbReference type="EMDB" id="EMD-47725"/>
<dbReference type="EMDB" id="EMD-47726"/>
<dbReference type="EMDB" id="EMD-47727"/>
<dbReference type="EMDB" id="EMD-60138"/>
<dbReference type="EMDB" id="EMD-60139"/>
<dbReference type="EMDB" id="EMD-8663"/>
<dbReference type="EMDB" id="EMD-8664"/>
<dbReference type="EMDB" id="EMD-8665"/>
<dbReference type="EMDB" id="EMD-8666"/>
<dbReference type="EMDB" id="EMD-8667"/>
<dbReference type="EMDB" id="EMD-8668"/>
<dbReference type="EMDB" id="EMD-8672"/>
<dbReference type="EMDB" id="EMD-8674"/>
<dbReference type="EMDB" id="EMD-8675"/>
<dbReference type="EMDB" id="EMD-8676"/>
<dbReference type="EMDB" id="EMD-8684"/>
<dbReference type="EMDB" id="EMD-9216"/>
<dbReference type="EMDB" id="EMD-9217"/>
<dbReference type="EMDB" id="EMD-9218"/>
<dbReference type="EMDB" id="EMD-9219"/>
<dbReference type="EMDB" id="EMD-9220"/>
<dbReference type="EMDB" id="EMD-9221"/>
<dbReference type="EMDB" id="EMD-9222"/>
<dbReference type="EMDB" id="EMD-9511"/>
<dbReference type="EMDB" id="EMD-9512"/>
<dbReference type="SMR" id="P51665"/>
<dbReference type="BioGRID" id="111685">
    <property type="interactions" value="269"/>
</dbReference>
<dbReference type="ComplexPortal" id="CPX-5993">
    <property type="entry name" value="26S proteasome complex"/>
</dbReference>
<dbReference type="ComplexPortal" id="CPX-8964">
    <property type="entry name" value="19S proteasome regulatory complex"/>
</dbReference>
<dbReference type="ComplexPortal" id="CPX-9082">
    <property type="entry name" value="19S-20S-PA28-alphabeta hybrid proteasome complex"/>
</dbReference>
<dbReference type="ComplexPortal" id="CPX-9085">
    <property type="entry name" value="19S-20S-PA28-gamma hybrid proteasome complex"/>
</dbReference>
<dbReference type="ComplexPortal" id="CPX-9086">
    <property type="entry name" value="30S proteasome complex"/>
</dbReference>
<dbReference type="CORUM" id="P51665"/>
<dbReference type="DIP" id="DIP-27572N"/>
<dbReference type="FunCoup" id="P51665">
    <property type="interactions" value="3602"/>
</dbReference>
<dbReference type="IntAct" id="P51665">
    <property type="interactions" value="126"/>
</dbReference>
<dbReference type="MINT" id="P51665"/>
<dbReference type="STRING" id="9606.ENSP00000219313"/>
<dbReference type="ChEMBL" id="CHEMBL2364701"/>
<dbReference type="MEROPS" id="M67.973"/>
<dbReference type="GlyGen" id="P51665">
    <property type="glycosylation" value="2 sites, 1 O-linked glycan (1 site)"/>
</dbReference>
<dbReference type="iPTMnet" id="P51665"/>
<dbReference type="MetOSite" id="P51665"/>
<dbReference type="PhosphoSitePlus" id="P51665"/>
<dbReference type="BioMuta" id="PSMD7"/>
<dbReference type="DMDM" id="20532412"/>
<dbReference type="jPOST" id="P51665"/>
<dbReference type="MassIVE" id="P51665"/>
<dbReference type="PaxDb" id="9606-ENSP00000219313"/>
<dbReference type="PeptideAtlas" id="P51665"/>
<dbReference type="ProteomicsDB" id="56361"/>
<dbReference type="Pumba" id="P51665"/>
<dbReference type="Antibodypedia" id="30221">
    <property type="antibodies" value="328 antibodies from 33 providers"/>
</dbReference>
<dbReference type="DNASU" id="5713"/>
<dbReference type="Ensembl" id="ENST00000219313.9">
    <property type="protein sequence ID" value="ENSP00000219313.4"/>
    <property type="gene ID" value="ENSG00000103035.11"/>
</dbReference>
<dbReference type="GeneID" id="5713"/>
<dbReference type="KEGG" id="hsa:5713"/>
<dbReference type="MANE-Select" id="ENST00000219313.9">
    <property type="protein sequence ID" value="ENSP00000219313.4"/>
    <property type="RefSeq nucleotide sequence ID" value="NM_002811.5"/>
    <property type="RefSeq protein sequence ID" value="NP_002802.2"/>
</dbReference>
<dbReference type="UCSC" id="uc002fcq.3">
    <property type="organism name" value="human"/>
</dbReference>
<dbReference type="AGR" id="HGNC:9565"/>
<dbReference type="CTD" id="5713"/>
<dbReference type="DisGeNET" id="5713"/>
<dbReference type="GeneCards" id="PSMD7"/>
<dbReference type="HGNC" id="HGNC:9565">
    <property type="gene designation" value="PSMD7"/>
</dbReference>
<dbReference type="HPA" id="ENSG00000103035">
    <property type="expression patterns" value="Low tissue specificity"/>
</dbReference>
<dbReference type="MIM" id="157970">
    <property type="type" value="gene"/>
</dbReference>
<dbReference type="neXtProt" id="NX_P51665"/>
<dbReference type="OpenTargets" id="ENSG00000103035"/>
<dbReference type="PharmGKB" id="PA33911"/>
<dbReference type="VEuPathDB" id="HostDB:ENSG00000103035"/>
<dbReference type="eggNOG" id="KOG1556">
    <property type="taxonomic scope" value="Eukaryota"/>
</dbReference>
<dbReference type="GeneTree" id="ENSGT00950000183073"/>
<dbReference type="HOGENOM" id="CLU_027018_3_0_1"/>
<dbReference type="InParanoid" id="P51665"/>
<dbReference type="OMA" id="HAMSIKT"/>
<dbReference type="OrthoDB" id="10256771at2759"/>
<dbReference type="PAN-GO" id="P51665">
    <property type="GO annotations" value="2 GO annotations based on evolutionary models"/>
</dbReference>
<dbReference type="PhylomeDB" id="P51665"/>
<dbReference type="PathwayCommons" id="P51665"/>
<dbReference type="Reactome" id="R-HSA-1169091">
    <property type="pathway name" value="Activation of NF-kappaB in B cells"/>
</dbReference>
<dbReference type="Reactome" id="R-HSA-1234176">
    <property type="pathway name" value="Oxygen-dependent proline hydroxylation of Hypoxia-inducible Factor Alpha"/>
</dbReference>
<dbReference type="Reactome" id="R-HSA-1236974">
    <property type="pathway name" value="ER-Phagosome pathway"/>
</dbReference>
<dbReference type="Reactome" id="R-HSA-1236978">
    <property type="pathway name" value="Cross-presentation of soluble exogenous antigens (endosomes)"/>
</dbReference>
<dbReference type="Reactome" id="R-HSA-174084">
    <property type="pathway name" value="Autodegradation of Cdh1 by Cdh1:APC/C"/>
</dbReference>
<dbReference type="Reactome" id="R-HSA-174113">
    <property type="pathway name" value="SCF-beta-TrCP mediated degradation of Emi1"/>
</dbReference>
<dbReference type="Reactome" id="R-HSA-174154">
    <property type="pathway name" value="APC/C:Cdc20 mediated degradation of Securin"/>
</dbReference>
<dbReference type="Reactome" id="R-HSA-174178">
    <property type="pathway name" value="APC/C:Cdh1 mediated degradation of Cdc20 and other APC/C:Cdh1 targeted proteins in late mitosis/early G1"/>
</dbReference>
<dbReference type="Reactome" id="R-HSA-174184">
    <property type="pathway name" value="Cdc20:Phospho-APC/C mediated degradation of Cyclin A"/>
</dbReference>
<dbReference type="Reactome" id="R-HSA-180534">
    <property type="pathway name" value="Vpu mediated degradation of CD4"/>
</dbReference>
<dbReference type="Reactome" id="R-HSA-180585">
    <property type="pathway name" value="Vif-mediated degradation of APOBEC3G"/>
</dbReference>
<dbReference type="Reactome" id="R-HSA-187577">
    <property type="pathway name" value="SCF(Skp2)-mediated degradation of p27/p21"/>
</dbReference>
<dbReference type="Reactome" id="R-HSA-195253">
    <property type="pathway name" value="Degradation of beta-catenin by the destruction complex"/>
</dbReference>
<dbReference type="Reactome" id="R-HSA-202424">
    <property type="pathway name" value="Downstream TCR signaling"/>
</dbReference>
<dbReference type="Reactome" id="R-HSA-211733">
    <property type="pathway name" value="Regulation of activated PAK-2p34 by proteasome mediated degradation"/>
</dbReference>
<dbReference type="Reactome" id="R-HSA-2467813">
    <property type="pathway name" value="Separation of Sister Chromatids"/>
</dbReference>
<dbReference type="Reactome" id="R-HSA-2871837">
    <property type="pathway name" value="FCERI mediated NF-kB activation"/>
</dbReference>
<dbReference type="Reactome" id="R-HSA-349425">
    <property type="pathway name" value="Autodegradation of the E3 ubiquitin ligase COP1"/>
</dbReference>
<dbReference type="Reactome" id="R-HSA-350562">
    <property type="pathway name" value="Regulation of ornithine decarboxylase (ODC)"/>
</dbReference>
<dbReference type="Reactome" id="R-HSA-382556">
    <property type="pathway name" value="ABC-family proteins mediated transport"/>
</dbReference>
<dbReference type="Reactome" id="R-HSA-450408">
    <property type="pathway name" value="AUF1 (hnRNP D0) binds and destabilizes mRNA"/>
</dbReference>
<dbReference type="Reactome" id="R-HSA-4608870">
    <property type="pathway name" value="Asymmetric localization of PCP proteins"/>
</dbReference>
<dbReference type="Reactome" id="R-HSA-4641257">
    <property type="pathway name" value="Degradation of AXIN"/>
</dbReference>
<dbReference type="Reactome" id="R-HSA-4641258">
    <property type="pathway name" value="Degradation of DVL"/>
</dbReference>
<dbReference type="Reactome" id="R-HSA-5358346">
    <property type="pathway name" value="Hedgehog ligand biogenesis"/>
</dbReference>
<dbReference type="Reactome" id="R-HSA-5362768">
    <property type="pathway name" value="Hh mutants are degraded by ERAD"/>
</dbReference>
<dbReference type="Reactome" id="R-HSA-5607761">
    <property type="pathway name" value="Dectin-1 mediated noncanonical NF-kB signaling"/>
</dbReference>
<dbReference type="Reactome" id="R-HSA-5607764">
    <property type="pathway name" value="CLEC7A (Dectin-1) signaling"/>
</dbReference>
<dbReference type="Reactome" id="R-HSA-5610780">
    <property type="pathway name" value="Degradation of GLI1 by the proteasome"/>
</dbReference>
<dbReference type="Reactome" id="R-HSA-5610783">
    <property type="pathway name" value="Degradation of GLI2 by the proteasome"/>
</dbReference>
<dbReference type="Reactome" id="R-HSA-5610785">
    <property type="pathway name" value="GLI3 is processed to GLI3R by the proteasome"/>
</dbReference>
<dbReference type="Reactome" id="R-HSA-5632684">
    <property type="pathway name" value="Hedgehog 'on' state"/>
</dbReference>
<dbReference type="Reactome" id="R-HSA-5658442">
    <property type="pathway name" value="Regulation of RAS by GAPs"/>
</dbReference>
<dbReference type="Reactome" id="R-HSA-5668541">
    <property type="pathway name" value="TNFR2 non-canonical NF-kB pathway"/>
</dbReference>
<dbReference type="Reactome" id="R-HSA-5676590">
    <property type="pathway name" value="NIK--&gt;noncanonical NF-kB signaling"/>
</dbReference>
<dbReference type="Reactome" id="R-HSA-5678895">
    <property type="pathway name" value="Defective CFTR causes cystic fibrosis"/>
</dbReference>
<dbReference type="Reactome" id="R-HSA-5687128">
    <property type="pathway name" value="MAPK6/MAPK4 signaling"/>
</dbReference>
<dbReference type="Reactome" id="R-HSA-5689603">
    <property type="pathway name" value="UCH proteinases"/>
</dbReference>
<dbReference type="Reactome" id="R-HSA-5689880">
    <property type="pathway name" value="Ub-specific processing proteases"/>
</dbReference>
<dbReference type="Reactome" id="R-HSA-6798695">
    <property type="pathway name" value="Neutrophil degranulation"/>
</dbReference>
<dbReference type="Reactome" id="R-HSA-68867">
    <property type="pathway name" value="Assembly of the pre-replicative complex"/>
</dbReference>
<dbReference type="Reactome" id="R-HSA-68949">
    <property type="pathway name" value="Orc1 removal from chromatin"/>
</dbReference>
<dbReference type="Reactome" id="R-HSA-69017">
    <property type="pathway name" value="CDK-mediated phosphorylation and removal of Cdc6"/>
</dbReference>
<dbReference type="Reactome" id="R-HSA-69481">
    <property type="pathway name" value="G2/M Checkpoints"/>
</dbReference>
<dbReference type="Reactome" id="R-HSA-69601">
    <property type="pathway name" value="Ubiquitin Mediated Degradation of Phosphorylated Cdc25A"/>
</dbReference>
<dbReference type="Reactome" id="R-HSA-75815">
    <property type="pathway name" value="Ubiquitin-dependent degradation of Cyclin D"/>
</dbReference>
<dbReference type="Reactome" id="R-HSA-8852276">
    <property type="pathway name" value="The role of GTSE1 in G2/M progression after G2 checkpoint"/>
</dbReference>
<dbReference type="Reactome" id="R-HSA-8854050">
    <property type="pathway name" value="FBXL7 down-regulates AURKA during mitotic entry and in early mitosis"/>
</dbReference>
<dbReference type="Reactome" id="R-HSA-8939236">
    <property type="pathway name" value="RUNX1 regulates transcription of genes involved in differentiation of HSCs"/>
</dbReference>
<dbReference type="Reactome" id="R-HSA-8939902">
    <property type="pathway name" value="Regulation of RUNX2 expression and activity"/>
</dbReference>
<dbReference type="Reactome" id="R-HSA-8941858">
    <property type="pathway name" value="Regulation of RUNX3 expression and activity"/>
</dbReference>
<dbReference type="Reactome" id="R-HSA-8948751">
    <property type="pathway name" value="Regulation of PTEN stability and activity"/>
</dbReference>
<dbReference type="Reactome" id="R-HSA-8951664">
    <property type="pathway name" value="Neddylation"/>
</dbReference>
<dbReference type="Reactome" id="R-HSA-9010553">
    <property type="pathway name" value="Regulation of expression of SLITs and ROBOs"/>
</dbReference>
<dbReference type="Reactome" id="R-HSA-9020702">
    <property type="pathway name" value="Interleukin-1 signaling"/>
</dbReference>
<dbReference type="Reactome" id="R-HSA-9604323">
    <property type="pathway name" value="Negative regulation of NOTCH4 signaling"/>
</dbReference>
<dbReference type="Reactome" id="R-HSA-9755511">
    <property type="pathway name" value="KEAP1-NFE2L2 pathway"/>
</dbReference>
<dbReference type="Reactome" id="R-HSA-9762114">
    <property type="pathway name" value="GSK3B and BTRC:CUL1-mediated-degradation of NFE2L2"/>
</dbReference>
<dbReference type="Reactome" id="R-HSA-9824272">
    <property type="pathway name" value="Somitogenesis"/>
</dbReference>
<dbReference type="Reactome" id="R-HSA-983168">
    <property type="pathway name" value="Antigen processing: Ubiquitination &amp; Proteasome degradation"/>
</dbReference>
<dbReference type="Reactome" id="R-HSA-9907900">
    <property type="pathway name" value="Proteasome assembly"/>
</dbReference>
<dbReference type="SignaLink" id="P51665"/>
<dbReference type="SIGNOR" id="P51665"/>
<dbReference type="BioGRID-ORCS" id="5713">
    <property type="hits" value="741 hits in 1179 CRISPR screens"/>
</dbReference>
<dbReference type="ChiTaRS" id="PSMD7">
    <property type="organism name" value="human"/>
</dbReference>
<dbReference type="EvolutionaryTrace" id="P51665"/>
<dbReference type="GeneWiki" id="PSMD7"/>
<dbReference type="GenomeRNAi" id="5713"/>
<dbReference type="Pharos" id="P51665">
    <property type="development level" value="Tbio"/>
</dbReference>
<dbReference type="PRO" id="PR:P51665"/>
<dbReference type="Proteomes" id="UP000005640">
    <property type="component" value="Chromosome 16"/>
</dbReference>
<dbReference type="RNAct" id="P51665">
    <property type="molecule type" value="protein"/>
</dbReference>
<dbReference type="Bgee" id="ENSG00000103035">
    <property type="expression patterns" value="Expressed in gastrocnemius and 205 other cell types or tissues"/>
</dbReference>
<dbReference type="ExpressionAtlas" id="P51665">
    <property type="expression patterns" value="baseline and differential"/>
</dbReference>
<dbReference type="GO" id="GO:0005829">
    <property type="term" value="C:cytosol"/>
    <property type="evidence" value="ECO:0000304"/>
    <property type="project" value="Reactome"/>
</dbReference>
<dbReference type="GO" id="GO:0070062">
    <property type="term" value="C:extracellular exosome"/>
    <property type="evidence" value="ECO:0007005"/>
    <property type="project" value="UniProtKB"/>
</dbReference>
<dbReference type="GO" id="GO:0005576">
    <property type="term" value="C:extracellular region"/>
    <property type="evidence" value="ECO:0000304"/>
    <property type="project" value="Reactome"/>
</dbReference>
<dbReference type="GO" id="GO:1904813">
    <property type="term" value="C:ficolin-1-rich granule lumen"/>
    <property type="evidence" value="ECO:0000304"/>
    <property type="project" value="Reactome"/>
</dbReference>
<dbReference type="GO" id="GO:0016020">
    <property type="term" value="C:membrane"/>
    <property type="evidence" value="ECO:0007005"/>
    <property type="project" value="UniProtKB"/>
</dbReference>
<dbReference type="GO" id="GO:0005654">
    <property type="term" value="C:nucleoplasm"/>
    <property type="evidence" value="ECO:0000304"/>
    <property type="project" value="Reactome"/>
</dbReference>
<dbReference type="GO" id="GO:0005634">
    <property type="term" value="C:nucleus"/>
    <property type="evidence" value="ECO:0007005"/>
    <property type="project" value="UniProtKB"/>
</dbReference>
<dbReference type="GO" id="GO:0000502">
    <property type="term" value="C:proteasome complex"/>
    <property type="evidence" value="ECO:0000314"/>
    <property type="project" value="UniProtKB"/>
</dbReference>
<dbReference type="GO" id="GO:0005838">
    <property type="term" value="C:proteasome regulatory particle"/>
    <property type="evidence" value="ECO:0000304"/>
    <property type="project" value="ProtInc"/>
</dbReference>
<dbReference type="GO" id="GO:0034774">
    <property type="term" value="C:secretory granule lumen"/>
    <property type="evidence" value="ECO:0000304"/>
    <property type="project" value="Reactome"/>
</dbReference>
<dbReference type="GO" id="GO:0042803">
    <property type="term" value="F:protein homodimerization activity"/>
    <property type="evidence" value="ECO:0000314"/>
    <property type="project" value="UniProtKB"/>
</dbReference>
<dbReference type="GO" id="GO:0043161">
    <property type="term" value="P:proteasome-mediated ubiquitin-dependent protein catabolic process"/>
    <property type="evidence" value="ECO:0000318"/>
    <property type="project" value="GO_Central"/>
</dbReference>
<dbReference type="CDD" id="cd08062">
    <property type="entry name" value="MPN_RPN7_8"/>
    <property type="match status" value="1"/>
</dbReference>
<dbReference type="FunFam" id="3.40.140.10:FF:000009">
    <property type="entry name" value="26S proteasome non-ATPase regulatory subunit 7"/>
    <property type="match status" value="1"/>
</dbReference>
<dbReference type="Gene3D" id="3.40.140.10">
    <property type="entry name" value="Cytidine Deaminase, domain 2"/>
    <property type="match status" value="1"/>
</dbReference>
<dbReference type="InterPro" id="IPR024969">
    <property type="entry name" value="EIF3F/CSN6-like_C"/>
</dbReference>
<dbReference type="InterPro" id="IPR000555">
    <property type="entry name" value="JAMM/MPN+_dom"/>
</dbReference>
<dbReference type="InterPro" id="IPR037518">
    <property type="entry name" value="MPN"/>
</dbReference>
<dbReference type="InterPro" id="IPR033858">
    <property type="entry name" value="MPN_RPN7_8"/>
</dbReference>
<dbReference type="PANTHER" id="PTHR10540:SF7">
    <property type="entry name" value="26S PROTEASOME NON-ATPASE REGULATORY SUBUNIT 7"/>
    <property type="match status" value="1"/>
</dbReference>
<dbReference type="PANTHER" id="PTHR10540">
    <property type="entry name" value="EUKARYOTIC TRANSLATION INITIATION FACTOR 3 SUBUNIT F-RELATED"/>
    <property type="match status" value="1"/>
</dbReference>
<dbReference type="Pfam" id="PF01398">
    <property type="entry name" value="JAB"/>
    <property type="match status" value="1"/>
</dbReference>
<dbReference type="Pfam" id="PF13012">
    <property type="entry name" value="MitMem_reg"/>
    <property type="match status" value="1"/>
</dbReference>
<dbReference type="SMART" id="SM00232">
    <property type="entry name" value="JAB_MPN"/>
    <property type="match status" value="1"/>
</dbReference>
<dbReference type="PROSITE" id="PS50249">
    <property type="entry name" value="MPN"/>
    <property type="match status" value="1"/>
</dbReference>